<sequence>MAVITKIEVQKRSKERFNIYIDKGQGEEYGFSVNEVILIKHGLQKGLEIDEIALGNILYNEEVQKAYLQAISYLSYQMRTKLEIEDFLRKKEVGQAIISEVVSKLLHDRYINDKEYAILYTRTQSNVNRKGPTVIKRELLNKGVQDLIIMHSLQEYTKEKQIENALILIEKKKKSYQKHSFLQMKLKLDEMLVRKGYSRDVIQICLEELKDEKDDEKQQEALHYHGNKYYEKYKKYDGWTFENKMKQALYRKGFSIDEIEIFLQMKREEG</sequence>
<dbReference type="EMBL" id="AE016879">
    <property type="protein sequence ID" value="AAP24538.1"/>
    <property type="molecule type" value="Genomic_DNA"/>
</dbReference>
<dbReference type="EMBL" id="AE017334">
    <property type="protein sequence ID" value="AAT29610.1"/>
    <property type="molecule type" value="Genomic_DNA"/>
</dbReference>
<dbReference type="EMBL" id="AE017225">
    <property type="protein sequence ID" value="AAT52818.1"/>
    <property type="molecule type" value="Genomic_DNA"/>
</dbReference>
<dbReference type="RefSeq" id="NP_843052.1">
    <property type="nucleotide sequence ID" value="NC_003997.3"/>
</dbReference>
<dbReference type="RefSeq" id="WP_000268518.1">
    <property type="nucleotide sequence ID" value="NZ_WXXJ01000029.1"/>
</dbReference>
<dbReference type="RefSeq" id="YP_026767.1">
    <property type="nucleotide sequence ID" value="NC_005945.1"/>
</dbReference>
<dbReference type="SMR" id="Q81YW4"/>
<dbReference type="STRING" id="261594.GBAA_0516"/>
<dbReference type="DNASU" id="1087763"/>
<dbReference type="GeneID" id="45020565"/>
<dbReference type="KEGG" id="ban:BA_0516"/>
<dbReference type="KEGG" id="banh:HYU01_02745"/>
<dbReference type="KEGG" id="bar:GBAA_0516"/>
<dbReference type="KEGG" id="bat:BAS0487"/>
<dbReference type="PATRIC" id="fig|198094.11.peg.515"/>
<dbReference type="eggNOG" id="COG2137">
    <property type="taxonomic scope" value="Bacteria"/>
</dbReference>
<dbReference type="HOGENOM" id="CLU_066607_4_0_9"/>
<dbReference type="OMA" id="RGRYNIF"/>
<dbReference type="OrthoDB" id="5421057at2"/>
<dbReference type="Proteomes" id="UP000000427">
    <property type="component" value="Chromosome"/>
</dbReference>
<dbReference type="Proteomes" id="UP000000594">
    <property type="component" value="Chromosome"/>
</dbReference>
<dbReference type="GO" id="GO:0005737">
    <property type="term" value="C:cytoplasm"/>
    <property type="evidence" value="ECO:0007669"/>
    <property type="project" value="UniProtKB-SubCell"/>
</dbReference>
<dbReference type="GO" id="GO:0006282">
    <property type="term" value="P:regulation of DNA repair"/>
    <property type="evidence" value="ECO:0007669"/>
    <property type="project" value="UniProtKB-UniRule"/>
</dbReference>
<dbReference type="Gene3D" id="1.10.10.10">
    <property type="entry name" value="Winged helix-like DNA-binding domain superfamily/Winged helix DNA-binding domain"/>
    <property type="match status" value="4"/>
</dbReference>
<dbReference type="HAMAP" id="MF_01114">
    <property type="entry name" value="RecX"/>
    <property type="match status" value="1"/>
</dbReference>
<dbReference type="InterPro" id="IPR053926">
    <property type="entry name" value="RecX_HTH_1st"/>
</dbReference>
<dbReference type="InterPro" id="IPR053924">
    <property type="entry name" value="RecX_HTH_2nd"/>
</dbReference>
<dbReference type="InterPro" id="IPR053925">
    <property type="entry name" value="RecX_HTH_3rd"/>
</dbReference>
<dbReference type="InterPro" id="IPR003783">
    <property type="entry name" value="Regulatory_RecX"/>
</dbReference>
<dbReference type="InterPro" id="IPR036388">
    <property type="entry name" value="WH-like_DNA-bd_sf"/>
</dbReference>
<dbReference type="NCBIfam" id="NF010733">
    <property type="entry name" value="PRK14135.1"/>
    <property type="match status" value="1"/>
</dbReference>
<dbReference type="PANTHER" id="PTHR33602">
    <property type="entry name" value="REGULATORY PROTEIN RECX FAMILY PROTEIN"/>
    <property type="match status" value="1"/>
</dbReference>
<dbReference type="PANTHER" id="PTHR33602:SF1">
    <property type="entry name" value="REGULATORY PROTEIN RECX FAMILY PROTEIN"/>
    <property type="match status" value="1"/>
</dbReference>
<dbReference type="Pfam" id="PF21982">
    <property type="entry name" value="RecX_HTH1"/>
    <property type="match status" value="1"/>
</dbReference>
<dbReference type="Pfam" id="PF02631">
    <property type="entry name" value="RecX_HTH2"/>
    <property type="match status" value="1"/>
</dbReference>
<dbReference type="Pfam" id="PF21981">
    <property type="entry name" value="RecX_HTH3"/>
    <property type="match status" value="2"/>
</dbReference>
<feature type="chain" id="PRO_0000162414" description="Regulatory protein RecX">
    <location>
        <begin position="1"/>
        <end position="270"/>
    </location>
</feature>
<accession>Q81YW4</accession>
<accession>Q6I3R3</accession>
<accession>Q6KXH7</accession>
<gene>
    <name evidence="1" type="primary">recX</name>
    <name type="ordered locus">BA_0516</name>
    <name type="ordered locus">GBAA_0516</name>
    <name type="ordered locus">BAS0487</name>
</gene>
<reference key="1">
    <citation type="journal article" date="2003" name="Nature">
        <title>The genome sequence of Bacillus anthracis Ames and comparison to closely related bacteria.</title>
        <authorList>
            <person name="Read T.D."/>
            <person name="Peterson S.N."/>
            <person name="Tourasse N.J."/>
            <person name="Baillie L.W."/>
            <person name="Paulsen I.T."/>
            <person name="Nelson K.E."/>
            <person name="Tettelin H."/>
            <person name="Fouts D.E."/>
            <person name="Eisen J.A."/>
            <person name="Gill S.R."/>
            <person name="Holtzapple E.K."/>
            <person name="Okstad O.A."/>
            <person name="Helgason E."/>
            <person name="Rilstone J."/>
            <person name="Wu M."/>
            <person name="Kolonay J.F."/>
            <person name="Beanan M.J."/>
            <person name="Dodson R.J."/>
            <person name="Brinkac L.M."/>
            <person name="Gwinn M.L."/>
            <person name="DeBoy R.T."/>
            <person name="Madpu R."/>
            <person name="Daugherty S.C."/>
            <person name="Durkin A.S."/>
            <person name="Haft D.H."/>
            <person name="Nelson W.C."/>
            <person name="Peterson J.D."/>
            <person name="Pop M."/>
            <person name="Khouri H.M."/>
            <person name="Radune D."/>
            <person name="Benton J.L."/>
            <person name="Mahamoud Y."/>
            <person name="Jiang L."/>
            <person name="Hance I.R."/>
            <person name="Weidman J.F."/>
            <person name="Berry K.J."/>
            <person name="Plaut R.D."/>
            <person name="Wolf A.M."/>
            <person name="Watkins K.L."/>
            <person name="Nierman W.C."/>
            <person name="Hazen A."/>
            <person name="Cline R.T."/>
            <person name="Redmond C."/>
            <person name="Thwaite J.E."/>
            <person name="White O."/>
            <person name="Salzberg S.L."/>
            <person name="Thomason B."/>
            <person name="Friedlander A.M."/>
            <person name="Koehler T.M."/>
            <person name="Hanna P.C."/>
            <person name="Kolstoe A.-B."/>
            <person name="Fraser C.M."/>
        </authorList>
    </citation>
    <scope>NUCLEOTIDE SEQUENCE [LARGE SCALE GENOMIC DNA]</scope>
    <source>
        <strain>Ames / isolate Porton</strain>
    </source>
</reference>
<reference key="2">
    <citation type="journal article" date="2009" name="J. Bacteriol.">
        <title>The complete genome sequence of Bacillus anthracis Ames 'Ancestor'.</title>
        <authorList>
            <person name="Ravel J."/>
            <person name="Jiang L."/>
            <person name="Stanley S.T."/>
            <person name="Wilson M.R."/>
            <person name="Decker R.S."/>
            <person name="Read T.D."/>
            <person name="Worsham P."/>
            <person name="Keim P.S."/>
            <person name="Salzberg S.L."/>
            <person name="Fraser-Liggett C.M."/>
            <person name="Rasko D.A."/>
        </authorList>
    </citation>
    <scope>NUCLEOTIDE SEQUENCE [LARGE SCALE GENOMIC DNA]</scope>
    <source>
        <strain>Ames ancestor</strain>
    </source>
</reference>
<reference key="3">
    <citation type="submission" date="2004-01" db="EMBL/GenBank/DDBJ databases">
        <title>Complete genome sequence of Bacillus anthracis Sterne.</title>
        <authorList>
            <person name="Brettin T.S."/>
            <person name="Bruce D."/>
            <person name="Challacombe J.F."/>
            <person name="Gilna P."/>
            <person name="Han C."/>
            <person name="Hill K."/>
            <person name="Hitchcock P."/>
            <person name="Jackson P."/>
            <person name="Keim P."/>
            <person name="Longmire J."/>
            <person name="Lucas S."/>
            <person name="Okinaka R."/>
            <person name="Richardson P."/>
            <person name="Rubin E."/>
            <person name="Tice H."/>
        </authorList>
    </citation>
    <scope>NUCLEOTIDE SEQUENCE [LARGE SCALE GENOMIC DNA]</scope>
    <source>
        <strain>Sterne</strain>
    </source>
</reference>
<comment type="function">
    <text evidence="1">Modulates RecA activity.</text>
</comment>
<comment type="subcellular location">
    <subcellularLocation>
        <location evidence="1">Cytoplasm</location>
    </subcellularLocation>
</comment>
<comment type="similarity">
    <text evidence="1">Belongs to the RecX family.</text>
</comment>
<keyword id="KW-0963">Cytoplasm</keyword>
<keyword id="KW-1185">Reference proteome</keyword>
<organism>
    <name type="scientific">Bacillus anthracis</name>
    <dbReference type="NCBI Taxonomy" id="1392"/>
    <lineage>
        <taxon>Bacteria</taxon>
        <taxon>Bacillati</taxon>
        <taxon>Bacillota</taxon>
        <taxon>Bacilli</taxon>
        <taxon>Bacillales</taxon>
        <taxon>Bacillaceae</taxon>
        <taxon>Bacillus</taxon>
        <taxon>Bacillus cereus group</taxon>
    </lineage>
</organism>
<evidence type="ECO:0000255" key="1">
    <source>
        <dbReference type="HAMAP-Rule" id="MF_01114"/>
    </source>
</evidence>
<protein>
    <recommendedName>
        <fullName evidence="1">Regulatory protein RecX</fullName>
    </recommendedName>
</protein>
<name>RECX_BACAN</name>
<proteinExistence type="inferred from homology"/>